<accession>Q9M3D7</accession>
<protein>
    <recommendedName>
        <fullName>Putative L-type lectin-domain containing receptor kinase I.4</fullName>
        <shortName>LecRK-I.4</shortName>
        <ecNumber>2.7.11.1</ecNumber>
    </recommendedName>
</protein>
<gene>
    <name type="primary">LECRK14</name>
    <name type="ordered locus">At3g45420</name>
    <name type="ORF">F18N11.180</name>
</gene>
<proteinExistence type="inferred from homology"/>
<keyword id="KW-0067">ATP-binding</keyword>
<keyword id="KW-1003">Cell membrane</keyword>
<keyword id="KW-0325">Glycoprotein</keyword>
<keyword id="KW-0418">Kinase</keyword>
<keyword id="KW-0430">Lectin</keyword>
<keyword id="KW-0472">Membrane</keyword>
<keyword id="KW-0547">Nucleotide-binding</keyword>
<keyword id="KW-0675">Receptor</keyword>
<keyword id="KW-1185">Reference proteome</keyword>
<keyword id="KW-0723">Serine/threonine-protein kinase</keyword>
<keyword id="KW-0732">Signal</keyword>
<keyword id="KW-0808">Transferase</keyword>
<keyword id="KW-0812">Transmembrane</keyword>
<keyword id="KW-1133">Transmembrane helix</keyword>
<evidence type="ECO:0000250" key="1"/>
<evidence type="ECO:0000255" key="2"/>
<evidence type="ECO:0000255" key="3">
    <source>
        <dbReference type="PROSITE-ProRule" id="PRU00159"/>
    </source>
</evidence>
<evidence type="ECO:0000255" key="4">
    <source>
        <dbReference type="PROSITE-ProRule" id="PRU10027"/>
    </source>
</evidence>
<evidence type="ECO:0000305" key="5"/>
<organism>
    <name type="scientific">Arabidopsis thaliana</name>
    <name type="common">Mouse-ear cress</name>
    <dbReference type="NCBI Taxonomy" id="3702"/>
    <lineage>
        <taxon>Eukaryota</taxon>
        <taxon>Viridiplantae</taxon>
        <taxon>Streptophyta</taxon>
        <taxon>Embryophyta</taxon>
        <taxon>Tracheophyta</taxon>
        <taxon>Spermatophyta</taxon>
        <taxon>Magnoliopsida</taxon>
        <taxon>eudicotyledons</taxon>
        <taxon>Gunneridae</taxon>
        <taxon>Pentapetalae</taxon>
        <taxon>rosids</taxon>
        <taxon>malvids</taxon>
        <taxon>Brassicales</taxon>
        <taxon>Brassicaceae</taxon>
        <taxon>Camelineae</taxon>
        <taxon>Arabidopsis</taxon>
    </lineage>
</organism>
<name>LRK14_ARATH</name>
<comment type="catalytic activity">
    <reaction>
        <text>L-seryl-[protein] + ATP = O-phospho-L-seryl-[protein] + ADP + H(+)</text>
        <dbReference type="Rhea" id="RHEA:17989"/>
        <dbReference type="Rhea" id="RHEA-COMP:9863"/>
        <dbReference type="Rhea" id="RHEA-COMP:11604"/>
        <dbReference type="ChEBI" id="CHEBI:15378"/>
        <dbReference type="ChEBI" id="CHEBI:29999"/>
        <dbReference type="ChEBI" id="CHEBI:30616"/>
        <dbReference type="ChEBI" id="CHEBI:83421"/>
        <dbReference type="ChEBI" id="CHEBI:456216"/>
        <dbReference type="EC" id="2.7.11.1"/>
    </reaction>
</comment>
<comment type="catalytic activity">
    <reaction>
        <text>L-threonyl-[protein] + ATP = O-phospho-L-threonyl-[protein] + ADP + H(+)</text>
        <dbReference type="Rhea" id="RHEA:46608"/>
        <dbReference type="Rhea" id="RHEA-COMP:11060"/>
        <dbReference type="Rhea" id="RHEA-COMP:11605"/>
        <dbReference type="ChEBI" id="CHEBI:15378"/>
        <dbReference type="ChEBI" id="CHEBI:30013"/>
        <dbReference type="ChEBI" id="CHEBI:30616"/>
        <dbReference type="ChEBI" id="CHEBI:61977"/>
        <dbReference type="ChEBI" id="CHEBI:456216"/>
        <dbReference type="EC" id="2.7.11.1"/>
    </reaction>
</comment>
<comment type="subcellular location">
    <subcellularLocation>
        <location evidence="1">Cell membrane</location>
        <topology evidence="1">Single-pass type I membrane protein</topology>
    </subcellularLocation>
</comment>
<comment type="similarity">
    <text evidence="5">In the C-terminal section; belongs to the protein kinase superfamily. Ser/Thr protein kinase family.</text>
</comment>
<comment type="similarity">
    <text evidence="5">In the N-terminal section; belongs to the leguminous lectin family.</text>
</comment>
<dbReference type="EC" id="2.7.11.1"/>
<dbReference type="EMBL" id="AL132953">
    <property type="protein sequence ID" value="CAB72491.1"/>
    <property type="molecule type" value="Genomic_DNA"/>
</dbReference>
<dbReference type="EMBL" id="CP002686">
    <property type="protein sequence ID" value="AEE78028.1"/>
    <property type="molecule type" value="Genomic_DNA"/>
</dbReference>
<dbReference type="PIR" id="T47482">
    <property type="entry name" value="T47482"/>
</dbReference>
<dbReference type="RefSeq" id="NP_190128.1">
    <property type="nucleotide sequence ID" value="NM_114411.2"/>
</dbReference>
<dbReference type="SMR" id="Q9M3D7"/>
<dbReference type="FunCoup" id="Q9M3D7">
    <property type="interactions" value="31"/>
</dbReference>
<dbReference type="GlyCosmos" id="Q9M3D7">
    <property type="glycosylation" value="7 sites, No reported glycans"/>
</dbReference>
<dbReference type="GlyGen" id="Q9M3D7">
    <property type="glycosylation" value="7 sites"/>
</dbReference>
<dbReference type="PaxDb" id="3702-AT3G45420.1"/>
<dbReference type="ProteomicsDB" id="238731"/>
<dbReference type="EnsemblPlants" id="AT3G45420.1">
    <property type="protein sequence ID" value="AT3G45420.1"/>
    <property type="gene ID" value="AT3G45420"/>
</dbReference>
<dbReference type="GeneID" id="823680"/>
<dbReference type="Gramene" id="AT3G45420.1">
    <property type="protein sequence ID" value="AT3G45420.1"/>
    <property type="gene ID" value="AT3G45420"/>
</dbReference>
<dbReference type="KEGG" id="ath:AT3G45420"/>
<dbReference type="Araport" id="AT3G45420"/>
<dbReference type="TAIR" id="AT3G45420">
    <property type="gene designation" value="LECRK-I.4"/>
</dbReference>
<dbReference type="eggNOG" id="ENOG502QSJ4">
    <property type="taxonomic scope" value="Eukaryota"/>
</dbReference>
<dbReference type="HOGENOM" id="CLU_000288_62_3_1"/>
<dbReference type="InParanoid" id="Q9M3D7"/>
<dbReference type="OMA" id="FKMGHAF"/>
<dbReference type="OrthoDB" id="538607at2759"/>
<dbReference type="PhylomeDB" id="Q9M3D7"/>
<dbReference type="PRO" id="PR:Q9M3D7"/>
<dbReference type="Proteomes" id="UP000006548">
    <property type="component" value="Chromosome 3"/>
</dbReference>
<dbReference type="ExpressionAtlas" id="Q9M3D7">
    <property type="expression patterns" value="baseline and differential"/>
</dbReference>
<dbReference type="GO" id="GO:0005739">
    <property type="term" value="C:mitochondrion"/>
    <property type="evidence" value="ECO:0007005"/>
    <property type="project" value="TAIR"/>
</dbReference>
<dbReference type="GO" id="GO:0005886">
    <property type="term" value="C:plasma membrane"/>
    <property type="evidence" value="ECO:0000250"/>
    <property type="project" value="UniProtKB"/>
</dbReference>
<dbReference type="GO" id="GO:0005524">
    <property type="term" value="F:ATP binding"/>
    <property type="evidence" value="ECO:0007669"/>
    <property type="project" value="UniProtKB-KW"/>
</dbReference>
<dbReference type="GO" id="GO:0030246">
    <property type="term" value="F:carbohydrate binding"/>
    <property type="evidence" value="ECO:0007669"/>
    <property type="project" value="UniProtKB-KW"/>
</dbReference>
<dbReference type="GO" id="GO:0106310">
    <property type="term" value="F:protein serine kinase activity"/>
    <property type="evidence" value="ECO:0007669"/>
    <property type="project" value="RHEA"/>
</dbReference>
<dbReference type="GO" id="GO:0004674">
    <property type="term" value="F:protein serine/threonine kinase activity"/>
    <property type="evidence" value="ECO:0007669"/>
    <property type="project" value="UniProtKB-KW"/>
</dbReference>
<dbReference type="CDD" id="cd06899">
    <property type="entry name" value="lectin_legume_LecRK_Arcelin_ConA"/>
    <property type="match status" value="1"/>
</dbReference>
<dbReference type="CDD" id="cd14066">
    <property type="entry name" value="STKc_IRAK"/>
    <property type="match status" value="1"/>
</dbReference>
<dbReference type="FunFam" id="3.30.200.20:FF:000451">
    <property type="entry name" value="L-type lectin-domain containing receptor kinase I.9"/>
    <property type="match status" value="1"/>
</dbReference>
<dbReference type="FunFam" id="1.10.510.10:FF:000108">
    <property type="entry name" value="L-type lectin-domain containing receptor kinase S.4"/>
    <property type="match status" value="1"/>
</dbReference>
<dbReference type="FunFam" id="2.60.120.200:FF:000096">
    <property type="entry name" value="L-type lectin-domain containing receptor kinase V.9"/>
    <property type="match status" value="1"/>
</dbReference>
<dbReference type="Gene3D" id="2.60.120.200">
    <property type="match status" value="1"/>
</dbReference>
<dbReference type="Gene3D" id="3.30.200.20">
    <property type="entry name" value="Phosphorylase Kinase, domain 1"/>
    <property type="match status" value="1"/>
</dbReference>
<dbReference type="Gene3D" id="1.10.510.10">
    <property type="entry name" value="Transferase(Phosphotransferase) domain 1"/>
    <property type="match status" value="1"/>
</dbReference>
<dbReference type="InterPro" id="IPR013320">
    <property type="entry name" value="ConA-like_dom_sf"/>
</dbReference>
<dbReference type="InterPro" id="IPR011009">
    <property type="entry name" value="Kinase-like_dom_sf"/>
</dbReference>
<dbReference type="InterPro" id="IPR050528">
    <property type="entry name" value="L-type_Lectin-RKs"/>
</dbReference>
<dbReference type="InterPro" id="IPR001220">
    <property type="entry name" value="Legume_lectin_dom"/>
</dbReference>
<dbReference type="InterPro" id="IPR000719">
    <property type="entry name" value="Prot_kinase_dom"/>
</dbReference>
<dbReference type="InterPro" id="IPR017441">
    <property type="entry name" value="Protein_kinase_ATP_BS"/>
</dbReference>
<dbReference type="InterPro" id="IPR008271">
    <property type="entry name" value="Ser/Thr_kinase_AS"/>
</dbReference>
<dbReference type="PANTHER" id="PTHR27007">
    <property type="match status" value="1"/>
</dbReference>
<dbReference type="Pfam" id="PF00139">
    <property type="entry name" value="Lectin_legB"/>
    <property type="match status" value="1"/>
</dbReference>
<dbReference type="Pfam" id="PF00069">
    <property type="entry name" value="Pkinase"/>
    <property type="match status" value="1"/>
</dbReference>
<dbReference type="SMART" id="SM00220">
    <property type="entry name" value="S_TKc"/>
    <property type="match status" value="1"/>
</dbReference>
<dbReference type="SUPFAM" id="SSF49899">
    <property type="entry name" value="Concanavalin A-like lectins/glucanases"/>
    <property type="match status" value="1"/>
</dbReference>
<dbReference type="SUPFAM" id="SSF56112">
    <property type="entry name" value="Protein kinase-like (PK-like)"/>
    <property type="match status" value="1"/>
</dbReference>
<dbReference type="PROSITE" id="PS00107">
    <property type="entry name" value="PROTEIN_KINASE_ATP"/>
    <property type="match status" value="1"/>
</dbReference>
<dbReference type="PROSITE" id="PS50011">
    <property type="entry name" value="PROTEIN_KINASE_DOM"/>
    <property type="match status" value="1"/>
</dbReference>
<dbReference type="PROSITE" id="PS00108">
    <property type="entry name" value="PROTEIN_KINASE_ST"/>
    <property type="match status" value="1"/>
</dbReference>
<feature type="signal peptide" evidence="2">
    <location>
        <begin position="1"/>
        <end position="21"/>
    </location>
</feature>
<feature type="chain" id="PRO_0000403073" description="Putative L-type lectin-domain containing receptor kinase I.4">
    <location>
        <begin position="22"/>
        <end position="667"/>
    </location>
</feature>
<feature type="topological domain" description="Extracellular" evidence="2">
    <location>
        <begin position="22"/>
        <end position="294"/>
    </location>
</feature>
<feature type="transmembrane region" description="Helical" evidence="2">
    <location>
        <begin position="295"/>
        <end position="315"/>
    </location>
</feature>
<feature type="topological domain" description="Cytoplasmic" evidence="2">
    <location>
        <begin position="316"/>
        <end position="667"/>
    </location>
</feature>
<feature type="domain" description="Protein kinase" evidence="3">
    <location>
        <begin position="350"/>
        <end position="625"/>
    </location>
</feature>
<feature type="region of interest" description="Legume-lectin like">
    <location>
        <begin position="24"/>
        <end position="257"/>
    </location>
</feature>
<feature type="active site" description="Proton acceptor" evidence="3 4">
    <location>
        <position position="474"/>
    </location>
</feature>
<feature type="binding site" evidence="3">
    <location>
        <begin position="356"/>
        <end position="364"/>
    </location>
    <ligand>
        <name>ATP</name>
        <dbReference type="ChEBI" id="CHEBI:30616"/>
    </ligand>
</feature>
<feature type="binding site" evidence="3">
    <location>
        <position position="378"/>
    </location>
    <ligand>
        <name>ATP</name>
        <dbReference type="ChEBI" id="CHEBI:30616"/>
    </ligand>
</feature>
<feature type="glycosylation site" description="N-linked (GlcNAc...) asparagine" evidence="2">
    <location>
        <position position="55"/>
    </location>
</feature>
<feature type="glycosylation site" description="N-linked (GlcNAc...) asparagine" evidence="2">
    <location>
        <position position="110"/>
    </location>
</feature>
<feature type="glycosylation site" description="N-linked (GlcNAc...) asparagine" evidence="2">
    <location>
        <position position="124"/>
    </location>
</feature>
<feature type="glycosylation site" description="N-linked (GlcNAc...) asparagine" evidence="2">
    <location>
        <position position="128"/>
    </location>
</feature>
<feature type="glycosylation site" description="N-linked (GlcNAc...) asparagine" evidence="2">
    <location>
        <position position="181"/>
    </location>
</feature>
<feature type="glycosylation site" description="N-linked (GlcNAc...) asparagine" evidence="2">
    <location>
        <position position="204"/>
    </location>
</feature>
<feature type="glycosylation site" description="N-linked (GlcNAc...) asparagine" evidence="2">
    <location>
        <position position="225"/>
    </location>
</feature>
<reference key="1">
    <citation type="journal article" date="2000" name="Nature">
        <title>Sequence and analysis of chromosome 3 of the plant Arabidopsis thaliana.</title>
        <authorList>
            <person name="Salanoubat M."/>
            <person name="Lemcke K."/>
            <person name="Rieger M."/>
            <person name="Ansorge W."/>
            <person name="Unseld M."/>
            <person name="Fartmann B."/>
            <person name="Valle G."/>
            <person name="Bloecker H."/>
            <person name="Perez-Alonso M."/>
            <person name="Obermaier B."/>
            <person name="Delseny M."/>
            <person name="Boutry M."/>
            <person name="Grivell L.A."/>
            <person name="Mache R."/>
            <person name="Puigdomenech P."/>
            <person name="De Simone V."/>
            <person name="Choisne N."/>
            <person name="Artiguenave F."/>
            <person name="Robert C."/>
            <person name="Brottier P."/>
            <person name="Wincker P."/>
            <person name="Cattolico L."/>
            <person name="Weissenbach J."/>
            <person name="Saurin W."/>
            <person name="Quetier F."/>
            <person name="Schaefer M."/>
            <person name="Mueller-Auer S."/>
            <person name="Gabel C."/>
            <person name="Fuchs M."/>
            <person name="Benes V."/>
            <person name="Wurmbach E."/>
            <person name="Drzonek H."/>
            <person name="Erfle H."/>
            <person name="Jordan N."/>
            <person name="Bangert S."/>
            <person name="Wiedelmann R."/>
            <person name="Kranz H."/>
            <person name="Voss H."/>
            <person name="Holland R."/>
            <person name="Brandt P."/>
            <person name="Nyakatura G."/>
            <person name="Vezzi A."/>
            <person name="D'Angelo M."/>
            <person name="Pallavicini A."/>
            <person name="Toppo S."/>
            <person name="Simionati B."/>
            <person name="Conrad A."/>
            <person name="Hornischer K."/>
            <person name="Kauer G."/>
            <person name="Loehnert T.-H."/>
            <person name="Nordsiek G."/>
            <person name="Reichelt J."/>
            <person name="Scharfe M."/>
            <person name="Schoen O."/>
            <person name="Bargues M."/>
            <person name="Terol J."/>
            <person name="Climent J."/>
            <person name="Navarro P."/>
            <person name="Collado C."/>
            <person name="Perez-Perez A."/>
            <person name="Ottenwaelder B."/>
            <person name="Duchemin D."/>
            <person name="Cooke R."/>
            <person name="Laudie M."/>
            <person name="Berger-Llauro C."/>
            <person name="Purnelle B."/>
            <person name="Masuy D."/>
            <person name="de Haan M."/>
            <person name="Maarse A.C."/>
            <person name="Alcaraz J.-P."/>
            <person name="Cottet A."/>
            <person name="Casacuberta E."/>
            <person name="Monfort A."/>
            <person name="Argiriou A."/>
            <person name="Flores M."/>
            <person name="Liguori R."/>
            <person name="Vitale D."/>
            <person name="Mannhaupt G."/>
            <person name="Haase D."/>
            <person name="Schoof H."/>
            <person name="Rudd S."/>
            <person name="Zaccaria P."/>
            <person name="Mewes H.-W."/>
            <person name="Mayer K.F.X."/>
            <person name="Kaul S."/>
            <person name="Town C.D."/>
            <person name="Koo H.L."/>
            <person name="Tallon L.J."/>
            <person name="Jenkins J."/>
            <person name="Rooney T."/>
            <person name="Rizzo M."/>
            <person name="Walts A."/>
            <person name="Utterback T."/>
            <person name="Fujii C.Y."/>
            <person name="Shea T.P."/>
            <person name="Creasy T.H."/>
            <person name="Haas B."/>
            <person name="Maiti R."/>
            <person name="Wu D."/>
            <person name="Peterson J."/>
            <person name="Van Aken S."/>
            <person name="Pai G."/>
            <person name="Militscher J."/>
            <person name="Sellers P."/>
            <person name="Gill J.E."/>
            <person name="Feldblyum T.V."/>
            <person name="Preuss D."/>
            <person name="Lin X."/>
            <person name="Nierman W.C."/>
            <person name="Salzberg S.L."/>
            <person name="White O."/>
            <person name="Venter J.C."/>
            <person name="Fraser C.M."/>
            <person name="Kaneko T."/>
            <person name="Nakamura Y."/>
            <person name="Sato S."/>
            <person name="Kato T."/>
            <person name="Asamizu E."/>
            <person name="Sasamoto S."/>
            <person name="Kimura T."/>
            <person name="Idesawa K."/>
            <person name="Kawashima K."/>
            <person name="Kishida Y."/>
            <person name="Kiyokawa C."/>
            <person name="Kohara M."/>
            <person name="Matsumoto M."/>
            <person name="Matsuno A."/>
            <person name="Muraki A."/>
            <person name="Nakayama S."/>
            <person name="Nakazaki N."/>
            <person name="Shinpo S."/>
            <person name="Takeuchi C."/>
            <person name="Wada T."/>
            <person name="Watanabe A."/>
            <person name="Yamada M."/>
            <person name="Yasuda M."/>
            <person name="Tabata S."/>
        </authorList>
    </citation>
    <scope>NUCLEOTIDE SEQUENCE [LARGE SCALE GENOMIC DNA]</scope>
    <source>
        <strain>cv. Columbia</strain>
    </source>
</reference>
<reference key="2">
    <citation type="journal article" date="2017" name="Plant J.">
        <title>Araport11: a complete reannotation of the Arabidopsis thaliana reference genome.</title>
        <authorList>
            <person name="Cheng C.Y."/>
            <person name="Krishnakumar V."/>
            <person name="Chan A.P."/>
            <person name="Thibaud-Nissen F."/>
            <person name="Schobel S."/>
            <person name="Town C.D."/>
        </authorList>
    </citation>
    <scope>GENOME REANNOTATION</scope>
    <source>
        <strain>cv. Columbia</strain>
    </source>
</reference>
<reference key="3">
    <citation type="journal article" date="2002" name="Crit. Rev. Plant Sci.">
        <title>Lectin receptor kinases in plants.</title>
        <authorList>
            <person name="Barre A."/>
            <person name="Herve C."/>
            <person name="Lescure B."/>
            <person name="Rouge P."/>
        </authorList>
    </citation>
    <scope>GENE FAMILY</scope>
</reference>
<reference key="4">
    <citation type="journal article" date="2009" name="J. Exp. Bot.">
        <title>Arabidopsis L-type lectin receptor kinases: phylogeny, classification, and expression profiles.</title>
        <authorList>
            <person name="Bouwmeester K."/>
            <person name="Govers F."/>
        </authorList>
    </citation>
    <scope>GENE FAMILY</scope>
    <scope>NOMENCLATURE</scope>
</reference>
<sequence>MDCRLHLVLFFSCVCLICLSGQQETGFVYNGFHQEDLFIDGIAMILPGGLLQLTNASQLKIGHAFFKQPFGFDPSSSLSFYTHFVCALVPPKFGAEVGHGMAFVVSPSMNFSHAFPTQYLGVFNSSTNVTSSSHLLAIELDTVETVDFHDLEKAHVGIDVNNPISIESALPSYFSDALGKNISINLVSGEPVQVWIDYDGSLLNVTLAPIEIQKPNRPLISRDINLSEIFQDKMYIGFSGSNGRLTSNQYILGWSFSKSKEFMQSLDLSKLPQAPIPRNEQAPVPREEKKKLHPLLIGLVILLVIPVLMVLGGVYWYRRKKYAEVKESWEKEYGPHRYSYKSLYKATNGFVKDALVGKGGFGKVYKGTLPGGRHIAVKRLSHDAEQGMKQFVAEVVTMGNIQHRNLVPLLGYCRRKGELLLVSEYMSNGSLDQYLFYNQNPSPSWLQRISILKDIASALNYLHSGANPAVLHRDIKASNVMLDSEYNGRLGDFGMAKFQDPQGNLSATAAVGTIGYMAPELIRTGTSKETDVYAFGIFLLEVTCGRRPFEPELPVQKKYLVKWVCECWKQASLLETRDPKLGREFLSEEVEMVLKLGLLCTNDVPESRPDMGQVMQYLSQKQPLPDFSADSPGIGGFMPVSVEPSSTIGIPDSSMHVTHSILEGYGR</sequence>